<reference key="1">
    <citation type="journal article" date="2007" name="PLoS Genet.">
        <title>Patterns and implications of gene gain and loss in the evolution of Prochlorococcus.</title>
        <authorList>
            <person name="Kettler G.C."/>
            <person name="Martiny A.C."/>
            <person name="Huang K."/>
            <person name="Zucker J."/>
            <person name="Coleman M.L."/>
            <person name="Rodrigue S."/>
            <person name="Chen F."/>
            <person name="Lapidus A."/>
            <person name="Ferriera S."/>
            <person name="Johnson J."/>
            <person name="Steglich C."/>
            <person name="Church G.M."/>
            <person name="Richardson P."/>
            <person name="Chisholm S.W."/>
        </authorList>
    </citation>
    <scope>NUCLEOTIDE SEQUENCE [LARGE SCALE GENOMIC DNA]</scope>
    <source>
        <strain>MIT 9301</strain>
    </source>
</reference>
<keyword id="KW-0963">Cytoplasm</keyword>
<keyword id="KW-0238">DNA-binding</keyword>
<keyword id="KW-1185">Reference proteome</keyword>
<accession>A3PA67</accession>
<comment type="function">
    <text evidence="1">Binds to DNA and alters its conformation. May be involved in regulation of gene expression, nucleoid organization and DNA protection.</text>
</comment>
<comment type="subunit">
    <text evidence="1">Homodimer.</text>
</comment>
<comment type="subcellular location">
    <subcellularLocation>
        <location evidence="1">Cytoplasm</location>
        <location evidence="1">Nucleoid</location>
    </subcellularLocation>
</comment>
<comment type="similarity">
    <text evidence="1">Belongs to the YbaB/EbfC family.</text>
</comment>
<proteinExistence type="inferred from homology"/>
<evidence type="ECO:0000255" key="1">
    <source>
        <dbReference type="HAMAP-Rule" id="MF_00274"/>
    </source>
</evidence>
<dbReference type="EMBL" id="CP000576">
    <property type="protein sequence ID" value="ABO16642.1"/>
    <property type="molecule type" value="Genomic_DNA"/>
</dbReference>
<dbReference type="RefSeq" id="WP_011862047.1">
    <property type="nucleotide sequence ID" value="NC_009091.1"/>
</dbReference>
<dbReference type="SMR" id="A3PA67"/>
<dbReference type="STRING" id="167546.P9301_00191"/>
<dbReference type="KEGG" id="pmg:P9301_00191"/>
<dbReference type="eggNOG" id="COG0718">
    <property type="taxonomic scope" value="Bacteria"/>
</dbReference>
<dbReference type="HOGENOM" id="CLU_140930_0_1_3"/>
<dbReference type="OrthoDB" id="487780at2"/>
<dbReference type="Proteomes" id="UP000001430">
    <property type="component" value="Chromosome"/>
</dbReference>
<dbReference type="GO" id="GO:0043590">
    <property type="term" value="C:bacterial nucleoid"/>
    <property type="evidence" value="ECO:0007669"/>
    <property type="project" value="UniProtKB-UniRule"/>
</dbReference>
<dbReference type="GO" id="GO:0005829">
    <property type="term" value="C:cytosol"/>
    <property type="evidence" value="ECO:0007669"/>
    <property type="project" value="TreeGrafter"/>
</dbReference>
<dbReference type="GO" id="GO:0003677">
    <property type="term" value="F:DNA binding"/>
    <property type="evidence" value="ECO:0007669"/>
    <property type="project" value="UniProtKB-UniRule"/>
</dbReference>
<dbReference type="Gene3D" id="3.30.1310.10">
    <property type="entry name" value="Nucleoid-associated protein YbaB-like domain"/>
    <property type="match status" value="1"/>
</dbReference>
<dbReference type="HAMAP" id="MF_00274">
    <property type="entry name" value="DNA_YbaB_EbfC"/>
    <property type="match status" value="1"/>
</dbReference>
<dbReference type="InterPro" id="IPR036894">
    <property type="entry name" value="YbaB-like_sf"/>
</dbReference>
<dbReference type="InterPro" id="IPR004401">
    <property type="entry name" value="YbaB/EbfC"/>
</dbReference>
<dbReference type="NCBIfam" id="TIGR00103">
    <property type="entry name" value="DNA_YbaB_EbfC"/>
    <property type="match status" value="1"/>
</dbReference>
<dbReference type="PANTHER" id="PTHR33449">
    <property type="entry name" value="NUCLEOID-ASSOCIATED PROTEIN YBAB"/>
    <property type="match status" value="1"/>
</dbReference>
<dbReference type="PANTHER" id="PTHR33449:SF1">
    <property type="entry name" value="NUCLEOID-ASSOCIATED PROTEIN YBAB"/>
    <property type="match status" value="1"/>
</dbReference>
<dbReference type="Pfam" id="PF02575">
    <property type="entry name" value="YbaB_DNA_bd"/>
    <property type="match status" value="1"/>
</dbReference>
<dbReference type="PIRSF" id="PIRSF004555">
    <property type="entry name" value="UCP004555"/>
    <property type="match status" value="1"/>
</dbReference>
<dbReference type="SUPFAM" id="SSF82607">
    <property type="entry name" value="YbaB-like"/>
    <property type="match status" value="1"/>
</dbReference>
<name>Y019_PROM0</name>
<gene>
    <name type="ordered locus">P9301_00191</name>
</gene>
<protein>
    <recommendedName>
        <fullName evidence="1">Nucleoid-associated protein P9301_00191</fullName>
    </recommendedName>
</protein>
<organism>
    <name type="scientific">Prochlorococcus marinus (strain MIT 9301)</name>
    <dbReference type="NCBI Taxonomy" id="167546"/>
    <lineage>
        <taxon>Bacteria</taxon>
        <taxon>Bacillati</taxon>
        <taxon>Cyanobacteriota</taxon>
        <taxon>Cyanophyceae</taxon>
        <taxon>Synechococcales</taxon>
        <taxon>Prochlorococcaceae</taxon>
        <taxon>Prochlorococcus</taxon>
    </lineage>
</organism>
<sequence length="116" mass="13094">MAGFGLPNFGQLTEAFKKAKQIQQDAQKLQDELENMEIEGKSDDEMIKVWISGNQLPLKVEVQENFLNADKEKIEQNILQAIKKAHELSTTTMKERMNDLTGGLNLNLPGFDNNDS</sequence>
<feature type="chain" id="PRO_1000003792" description="Nucleoid-associated protein P9301_00191">
    <location>
        <begin position="1"/>
        <end position="116"/>
    </location>
</feature>